<comment type="function">
    <text evidence="1">Can catalyze the hydrolysis of ATP in the presence of single-stranded DNA, the ATP-dependent uptake of single-stranded DNA by duplex DNA, and the ATP-dependent hybridization of homologous single-stranded DNAs. It interacts with LexA causing its activation and leading to its autocatalytic cleavage.</text>
</comment>
<comment type="subcellular location">
    <subcellularLocation>
        <location evidence="1">Cytoplasm</location>
    </subcellularLocation>
</comment>
<comment type="similarity">
    <text evidence="1">Belongs to the RecA family.</text>
</comment>
<reference key="1">
    <citation type="journal article" date="2009" name="Environ. Microbiol.">
        <title>Genome sequence of Desulfobacterium autotrophicum HRM2, a marine sulfate reducer oxidizing organic carbon completely to carbon dioxide.</title>
        <authorList>
            <person name="Strittmatter A.W."/>
            <person name="Liesegang H."/>
            <person name="Rabus R."/>
            <person name="Decker I."/>
            <person name="Amann J."/>
            <person name="Andres S."/>
            <person name="Henne A."/>
            <person name="Fricke W.F."/>
            <person name="Martinez-Arias R."/>
            <person name="Bartels D."/>
            <person name="Goesmann A."/>
            <person name="Krause L."/>
            <person name="Puehler A."/>
            <person name="Klenk H.P."/>
            <person name="Richter M."/>
            <person name="Schuler M."/>
            <person name="Gloeckner F.O."/>
            <person name="Meyerdierks A."/>
            <person name="Gottschalk G."/>
            <person name="Amann R."/>
        </authorList>
    </citation>
    <scope>NUCLEOTIDE SEQUENCE [LARGE SCALE GENOMIC DNA]</scope>
    <source>
        <strain>ATCC 43914 / DSM 3382 / VKM B-1955 / HRM2</strain>
    </source>
</reference>
<proteinExistence type="inferred from homology"/>
<keyword id="KW-0067">ATP-binding</keyword>
<keyword id="KW-0963">Cytoplasm</keyword>
<keyword id="KW-0227">DNA damage</keyword>
<keyword id="KW-0233">DNA recombination</keyword>
<keyword id="KW-0234">DNA repair</keyword>
<keyword id="KW-0238">DNA-binding</keyword>
<keyword id="KW-0547">Nucleotide-binding</keyword>
<keyword id="KW-1185">Reference proteome</keyword>
<keyword id="KW-0742">SOS response</keyword>
<feature type="chain" id="PRO_1000204703" description="Protein RecA">
    <location>
        <begin position="1"/>
        <end position="347"/>
    </location>
</feature>
<feature type="region of interest" description="Disordered" evidence="2">
    <location>
        <begin position="327"/>
        <end position="347"/>
    </location>
</feature>
<feature type="compositionally biased region" description="Basic and acidic residues" evidence="2">
    <location>
        <begin position="337"/>
        <end position="347"/>
    </location>
</feature>
<feature type="binding site" evidence="1">
    <location>
        <begin position="67"/>
        <end position="74"/>
    </location>
    <ligand>
        <name>ATP</name>
        <dbReference type="ChEBI" id="CHEBI:30616"/>
    </ligand>
</feature>
<organism>
    <name type="scientific">Desulforapulum autotrophicum (strain ATCC 43914 / DSM 3382 / VKM B-1955 / HRM2)</name>
    <name type="common">Desulfobacterium autotrophicum</name>
    <dbReference type="NCBI Taxonomy" id="177437"/>
    <lineage>
        <taxon>Bacteria</taxon>
        <taxon>Pseudomonadati</taxon>
        <taxon>Thermodesulfobacteriota</taxon>
        <taxon>Desulfobacteria</taxon>
        <taxon>Desulfobacterales</taxon>
        <taxon>Desulfobacteraceae</taxon>
        <taxon>Desulforapulum</taxon>
    </lineage>
</organism>
<dbReference type="EMBL" id="CP001087">
    <property type="protein sequence ID" value="ACN15826.1"/>
    <property type="molecule type" value="Genomic_DNA"/>
</dbReference>
<dbReference type="RefSeq" id="WP_015904589.1">
    <property type="nucleotide sequence ID" value="NC_012108.1"/>
</dbReference>
<dbReference type="SMR" id="C0QI90"/>
<dbReference type="STRING" id="177437.HRM2_27340"/>
<dbReference type="KEGG" id="dat:HRM2_27340"/>
<dbReference type="eggNOG" id="COG0468">
    <property type="taxonomic scope" value="Bacteria"/>
</dbReference>
<dbReference type="HOGENOM" id="CLU_040469_1_2_7"/>
<dbReference type="OrthoDB" id="9776733at2"/>
<dbReference type="Proteomes" id="UP000000442">
    <property type="component" value="Chromosome"/>
</dbReference>
<dbReference type="GO" id="GO:0005829">
    <property type="term" value="C:cytosol"/>
    <property type="evidence" value="ECO:0007669"/>
    <property type="project" value="TreeGrafter"/>
</dbReference>
<dbReference type="GO" id="GO:0005524">
    <property type="term" value="F:ATP binding"/>
    <property type="evidence" value="ECO:0007669"/>
    <property type="project" value="UniProtKB-UniRule"/>
</dbReference>
<dbReference type="GO" id="GO:0016887">
    <property type="term" value="F:ATP hydrolysis activity"/>
    <property type="evidence" value="ECO:0007669"/>
    <property type="project" value="InterPro"/>
</dbReference>
<dbReference type="GO" id="GO:0140664">
    <property type="term" value="F:ATP-dependent DNA damage sensor activity"/>
    <property type="evidence" value="ECO:0007669"/>
    <property type="project" value="InterPro"/>
</dbReference>
<dbReference type="GO" id="GO:0003684">
    <property type="term" value="F:damaged DNA binding"/>
    <property type="evidence" value="ECO:0007669"/>
    <property type="project" value="UniProtKB-UniRule"/>
</dbReference>
<dbReference type="GO" id="GO:0003697">
    <property type="term" value="F:single-stranded DNA binding"/>
    <property type="evidence" value="ECO:0007669"/>
    <property type="project" value="UniProtKB-UniRule"/>
</dbReference>
<dbReference type="GO" id="GO:0006310">
    <property type="term" value="P:DNA recombination"/>
    <property type="evidence" value="ECO:0007669"/>
    <property type="project" value="UniProtKB-UniRule"/>
</dbReference>
<dbReference type="GO" id="GO:0006281">
    <property type="term" value="P:DNA repair"/>
    <property type="evidence" value="ECO:0007669"/>
    <property type="project" value="UniProtKB-UniRule"/>
</dbReference>
<dbReference type="GO" id="GO:0009432">
    <property type="term" value="P:SOS response"/>
    <property type="evidence" value="ECO:0007669"/>
    <property type="project" value="UniProtKB-UniRule"/>
</dbReference>
<dbReference type="CDD" id="cd00983">
    <property type="entry name" value="RecA"/>
    <property type="match status" value="1"/>
</dbReference>
<dbReference type="FunFam" id="3.40.50.300:FF:000087">
    <property type="entry name" value="Recombinase RecA"/>
    <property type="match status" value="1"/>
</dbReference>
<dbReference type="Gene3D" id="3.40.50.300">
    <property type="entry name" value="P-loop containing nucleotide triphosphate hydrolases"/>
    <property type="match status" value="1"/>
</dbReference>
<dbReference type="HAMAP" id="MF_00268">
    <property type="entry name" value="RecA"/>
    <property type="match status" value="1"/>
</dbReference>
<dbReference type="InterPro" id="IPR003593">
    <property type="entry name" value="AAA+_ATPase"/>
</dbReference>
<dbReference type="InterPro" id="IPR013765">
    <property type="entry name" value="DNA_recomb/repair_RecA"/>
</dbReference>
<dbReference type="InterPro" id="IPR020584">
    <property type="entry name" value="DNA_recomb/repair_RecA_CS"/>
</dbReference>
<dbReference type="InterPro" id="IPR027417">
    <property type="entry name" value="P-loop_NTPase"/>
</dbReference>
<dbReference type="InterPro" id="IPR049261">
    <property type="entry name" value="RecA-like_C"/>
</dbReference>
<dbReference type="InterPro" id="IPR049428">
    <property type="entry name" value="RecA-like_N"/>
</dbReference>
<dbReference type="InterPro" id="IPR020588">
    <property type="entry name" value="RecA_ATP-bd"/>
</dbReference>
<dbReference type="InterPro" id="IPR023400">
    <property type="entry name" value="RecA_C_sf"/>
</dbReference>
<dbReference type="InterPro" id="IPR020587">
    <property type="entry name" value="RecA_monomer-monomer_interface"/>
</dbReference>
<dbReference type="NCBIfam" id="TIGR02012">
    <property type="entry name" value="tigrfam_recA"/>
    <property type="match status" value="1"/>
</dbReference>
<dbReference type="PANTHER" id="PTHR45900:SF1">
    <property type="entry name" value="MITOCHONDRIAL DNA REPAIR PROTEIN RECA HOMOLOG-RELATED"/>
    <property type="match status" value="1"/>
</dbReference>
<dbReference type="PANTHER" id="PTHR45900">
    <property type="entry name" value="RECA"/>
    <property type="match status" value="1"/>
</dbReference>
<dbReference type="Pfam" id="PF00154">
    <property type="entry name" value="RecA"/>
    <property type="match status" value="1"/>
</dbReference>
<dbReference type="Pfam" id="PF21096">
    <property type="entry name" value="RecA_C"/>
    <property type="match status" value="1"/>
</dbReference>
<dbReference type="PRINTS" id="PR00142">
    <property type="entry name" value="RECA"/>
</dbReference>
<dbReference type="SMART" id="SM00382">
    <property type="entry name" value="AAA"/>
    <property type="match status" value="1"/>
</dbReference>
<dbReference type="SUPFAM" id="SSF52540">
    <property type="entry name" value="P-loop containing nucleoside triphosphate hydrolases"/>
    <property type="match status" value="1"/>
</dbReference>
<dbReference type="SUPFAM" id="SSF54752">
    <property type="entry name" value="RecA protein, C-terminal domain"/>
    <property type="match status" value="1"/>
</dbReference>
<dbReference type="PROSITE" id="PS00321">
    <property type="entry name" value="RECA_1"/>
    <property type="match status" value="1"/>
</dbReference>
<dbReference type="PROSITE" id="PS50162">
    <property type="entry name" value="RECA_2"/>
    <property type="match status" value="1"/>
</dbReference>
<dbReference type="PROSITE" id="PS50163">
    <property type="entry name" value="RECA_3"/>
    <property type="match status" value="1"/>
</dbReference>
<sequence>MAELTEKDKAIQTAMGQIERQFGKGSIMKLGAREIQAVPIISTGSLALDKALGVGGFPRGRVIEIYGPESSGKTTLALHAVAEAQRQGGIAAFIDAEHALDVAYARRLGVNCDELLVSQPDTGEQALEIVDMLVRSGAVDIIIVDSVAALVPRAEIEGDMGDSHMGLQARLMSQALRKLTATIGKTHTTLIFINQIRMKIGVVYGNPETTTGGNALKFYASVRIEIRKATAIKDGENILGNRTKVKVVKNKLAPPFKSIEFDLMYGEGISKTGELLDMGVDMGIVDKSGAWYSYDGERIGQGRQNAKVFFTDNPEIFNQIQARVREALGLSSPTPKENGKEKGKAKP</sequence>
<name>RECA_DESAH</name>
<evidence type="ECO:0000255" key="1">
    <source>
        <dbReference type="HAMAP-Rule" id="MF_00268"/>
    </source>
</evidence>
<evidence type="ECO:0000256" key="2">
    <source>
        <dbReference type="SAM" id="MobiDB-lite"/>
    </source>
</evidence>
<accession>C0QI90</accession>
<protein>
    <recommendedName>
        <fullName evidence="1">Protein RecA</fullName>
    </recommendedName>
    <alternativeName>
        <fullName evidence="1">Recombinase A</fullName>
    </alternativeName>
</protein>
<gene>
    <name evidence="1" type="primary">recA</name>
    <name type="ordered locus">HRM2_27340</name>
</gene>